<reference key="1">
    <citation type="journal article" date="2001" name="J. Bacteriol.">
        <title>Genome of the bacterium Streptococcus pneumoniae strain R6.</title>
        <authorList>
            <person name="Hoskins J."/>
            <person name="Alborn W.E. Jr."/>
            <person name="Arnold J."/>
            <person name="Blaszczak L.C."/>
            <person name="Burgett S."/>
            <person name="DeHoff B.S."/>
            <person name="Estrem S.T."/>
            <person name="Fritz L."/>
            <person name="Fu D.-J."/>
            <person name="Fuller W."/>
            <person name="Geringer C."/>
            <person name="Gilmour R."/>
            <person name="Glass J.S."/>
            <person name="Khoja H."/>
            <person name="Kraft A.R."/>
            <person name="Lagace R.E."/>
            <person name="LeBlanc D.J."/>
            <person name="Lee L.N."/>
            <person name="Lefkowitz E.J."/>
            <person name="Lu J."/>
            <person name="Matsushima P."/>
            <person name="McAhren S.M."/>
            <person name="McHenney M."/>
            <person name="McLeaster K."/>
            <person name="Mundy C.W."/>
            <person name="Nicas T.I."/>
            <person name="Norris F.H."/>
            <person name="O'Gara M."/>
            <person name="Peery R.B."/>
            <person name="Robertson G.T."/>
            <person name="Rockey P."/>
            <person name="Sun P.-M."/>
            <person name="Winkler M.E."/>
            <person name="Yang Y."/>
            <person name="Young-Bellido M."/>
            <person name="Zhao G."/>
            <person name="Zook C.A."/>
            <person name="Baltz R.H."/>
            <person name="Jaskunas S.R."/>
            <person name="Rosteck P.R. Jr."/>
            <person name="Skatrud P.L."/>
            <person name="Glass J.I."/>
        </authorList>
    </citation>
    <scope>NUCLEOTIDE SEQUENCE [LARGE SCALE GENOMIC DNA]</scope>
    <source>
        <strain>ATCC BAA-255 / R6</strain>
    </source>
</reference>
<accession>Q8DP13</accession>
<protein>
    <recommendedName>
        <fullName evidence="1">Ferredoxin--NADP reductase</fullName>
        <shortName evidence="1">FNR</shortName>
        <shortName evidence="1">Fd-NADP(+) reductase</shortName>
        <ecNumber evidence="1">1.18.1.2</ecNumber>
    </recommendedName>
</protein>
<proteinExistence type="inferred from homology"/>
<sequence length="322" mass="35329">MSQLYDITIVGGGPVGLFAAFYAHLRQAKVQIIDSLPQLGGQPAILYPEKEILDVPGFPNLTGEELTNRLIEQLNGFDTPIHLNETVLEIDKQEEEFAITTSKGSHLTKTVIIAMGGGAFKPRPLELEGVEDYENIHYHVSNIQQYAGKKVTILGGGDSAVDWALAFEKIAPTTLVHRRDNFRALEHSVQALQESSVTIKTPFAPSQLLGDGKTLDKLEITKVKSDETETIDLDHLFVNYGFKSSVGNLKNWGLDLNRHKIIVNSKQESSQAGIYAIGDCCYYDGKIDLIATGLGEAPTAVNNAINYIDPEQKVQPKHSTSL</sequence>
<keyword id="KW-0274">FAD</keyword>
<keyword id="KW-0285">Flavoprotein</keyword>
<keyword id="KW-0521">NADP</keyword>
<keyword id="KW-0560">Oxidoreductase</keyword>
<keyword id="KW-1185">Reference proteome</keyword>
<evidence type="ECO:0000255" key="1">
    <source>
        <dbReference type="HAMAP-Rule" id="MF_01685"/>
    </source>
</evidence>
<gene>
    <name type="ordered locus">spr1421</name>
</gene>
<feature type="chain" id="PRO_0000364957" description="Ferredoxin--NADP reductase">
    <location>
        <begin position="1"/>
        <end position="322"/>
    </location>
</feature>
<feature type="binding site" evidence="1">
    <location>
        <position position="34"/>
    </location>
    <ligand>
        <name>FAD</name>
        <dbReference type="ChEBI" id="CHEBI:57692"/>
    </ligand>
</feature>
<feature type="binding site" evidence="1">
    <location>
        <position position="42"/>
    </location>
    <ligand>
        <name>FAD</name>
        <dbReference type="ChEBI" id="CHEBI:57692"/>
    </ligand>
</feature>
<feature type="binding site" evidence="1">
    <location>
        <position position="47"/>
    </location>
    <ligand>
        <name>FAD</name>
        <dbReference type="ChEBI" id="CHEBI:57692"/>
    </ligand>
</feature>
<feature type="binding site" evidence="1">
    <location>
        <position position="87"/>
    </location>
    <ligand>
        <name>FAD</name>
        <dbReference type="ChEBI" id="CHEBI:57692"/>
    </ligand>
</feature>
<feature type="binding site" evidence="1">
    <location>
        <position position="120"/>
    </location>
    <ligand>
        <name>FAD</name>
        <dbReference type="ChEBI" id="CHEBI:57692"/>
    </ligand>
</feature>
<feature type="binding site" evidence="1">
    <location>
        <position position="279"/>
    </location>
    <ligand>
        <name>FAD</name>
        <dbReference type="ChEBI" id="CHEBI:57692"/>
    </ligand>
</feature>
<feature type="binding site" evidence="1">
    <location>
        <position position="320"/>
    </location>
    <ligand>
        <name>FAD</name>
        <dbReference type="ChEBI" id="CHEBI:57692"/>
    </ligand>
</feature>
<dbReference type="EC" id="1.18.1.2" evidence="1"/>
<dbReference type="EMBL" id="AE007317">
    <property type="protein sequence ID" value="AAL00225.1"/>
    <property type="molecule type" value="Genomic_DNA"/>
</dbReference>
<dbReference type="PIR" id="D98049">
    <property type="entry name" value="D98049"/>
</dbReference>
<dbReference type="RefSeq" id="NP_359014.1">
    <property type="nucleotide sequence ID" value="NC_003098.1"/>
</dbReference>
<dbReference type="RefSeq" id="WP_000080996.1">
    <property type="nucleotide sequence ID" value="NC_003098.1"/>
</dbReference>
<dbReference type="SMR" id="Q8DP13"/>
<dbReference type="STRING" id="171101.spr1421"/>
<dbReference type="KEGG" id="spr:spr1421"/>
<dbReference type="PATRIC" id="fig|171101.6.peg.1536"/>
<dbReference type="eggNOG" id="COG0492">
    <property type="taxonomic scope" value="Bacteria"/>
</dbReference>
<dbReference type="HOGENOM" id="CLU_031864_5_5_9"/>
<dbReference type="Proteomes" id="UP000000586">
    <property type="component" value="Chromosome"/>
</dbReference>
<dbReference type="GO" id="GO:0004324">
    <property type="term" value="F:ferredoxin-NADP+ reductase activity"/>
    <property type="evidence" value="ECO:0007669"/>
    <property type="project" value="UniProtKB-UniRule"/>
</dbReference>
<dbReference type="GO" id="GO:0050660">
    <property type="term" value="F:flavin adenine dinucleotide binding"/>
    <property type="evidence" value="ECO:0007669"/>
    <property type="project" value="UniProtKB-UniRule"/>
</dbReference>
<dbReference type="GO" id="GO:0050661">
    <property type="term" value="F:NADP binding"/>
    <property type="evidence" value="ECO:0007669"/>
    <property type="project" value="UniProtKB-UniRule"/>
</dbReference>
<dbReference type="GO" id="GO:0004791">
    <property type="term" value="F:thioredoxin-disulfide reductase (NADPH) activity"/>
    <property type="evidence" value="ECO:0000318"/>
    <property type="project" value="GO_Central"/>
</dbReference>
<dbReference type="GO" id="GO:0045454">
    <property type="term" value="P:cell redox homeostasis"/>
    <property type="evidence" value="ECO:0000318"/>
    <property type="project" value="GO_Central"/>
</dbReference>
<dbReference type="Gene3D" id="3.50.50.60">
    <property type="entry name" value="FAD/NAD(P)-binding domain"/>
    <property type="match status" value="2"/>
</dbReference>
<dbReference type="HAMAP" id="MF_01685">
    <property type="entry name" value="FENR2"/>
    <property type="match status" value="1"/>
</dbReference>
<dbReference type="InterPro" id="IPR036188">
    <property type="entry name" value="FAD/NAD-bd_sf"/>
</dbReference>
<dbReference type="InterPro" id="IPR023753">
    <property type="entry name" value="FAD/NAD-binding_dom"/>
</dbReference>
<dbReference type="InterPro" id="IPR022890">
    <property type="entry name" value="Fd--NADP_Rdtase_type_2"/>
</dbReference>
<dbReference type="InterPro" id="IPR050097">
    <property type="entry name" value="Ferredoxin-NADP_redctase_2"/>
</dbReference>
<dbReference type="PANTHER" id="PTHR48105">
    <property type="entry name" value="THIOREDOXIN REDUCTASE 1-RELATED-RELATED"/>
    <property type="match status" value="1"/>
</dbReference>
<dbReference type="Pfam" id="PF07992">
    <property type="entry name" value="Pyr_redox_2"/>
    <property type="match status" value="1"/>
</dbReference>
<dbReference type="PRINTS" id="PR00368">
    <property type="entry name" value="FADPNR"/>
</dbReference>
<dbReference type="PRINTS" id="PR00469">
    <property type="entry name" value="PNDRDTASEII"/>
</dbReference>
<dbReference type="SUPFAM" id="SSF51905">
    <property type="entry name" value="FAD/NAD(P)-binding domain"/>
    <property type="match status" value="1"/>
</dbReference>
<name>FENR_STRR6</name>
<comment type="catalytic activity">
    <reaction evidence="1">
        <text>2 reduced [2Fe-2S]-[ferredoxin] + NADP(+) + H(+) = 2 oxidized [2Fe-2S]-[ferredoxin] + NADPH</text>
        <dbReference type="Rhea" id="RHEA:20125"/>
        <dbReference type="Rhea" id="RHEA-COMP:10000"/>
        <dbReference type="Rhea" id="RHEA-COMP:10001"/>
        <dbReference type="ChEBI" id="CHEBI:15378"/>
        <dbReference type="ChEBI" id="CHEBI:33737"/>
        <dbReference type="ChEBI" id="CHEBI:33738"/>
        <dbReference type="ChEBI" id="CHEBI:57783"/>
        <dbReference type="ChEBI" id="CHEBI:58349"/>
        <dbReference type="EC" id="1.18.1.2"/>
    </reaction>
</comment>
<comment type="cofactor">
    <cofactor evidence="1">
        <name>FAD</name>
        <dbReference type="ChEBI" id="CHEBI:57692"/>
    </cofactor>
    <text evidence="1">Binds 1 FAD per subunit.</text>
</comment>
<comment type="subunit">
    <text evidence="1">Homodimer.</text>
</comment>
<comment type="similarity">
    <text evidence="1">Belongs to the ferredoxin--NADP reductase type 2 family.</text>
</comment>
<organism>
    <name type="scientific">Streptococcus pneumoniae (strain ATCC BAA-255 / R6)</name>
    <dbReference type="NCBI Taxonomy" id="171101"/>
    <lineage>
        <taxon>Bacteria</taxon>
        <taxon>Bacillati</taxon>
        <taxon>Bacillota</taxon>
        <taxon>Bacilli</taxon>
        <taxon>Lactobacillales</taxon>
        <taxon>Streptococcaceae</taxon>
        <taxon>Streptococcus</taxon>
    </lineage>
</organism>